<gene>
    <name evidence="1" type="primary">efp</name>
    <name type="ordered locus">Francci3_3206</name>
</gene>
<proteinExistence type="inferred from homology"/>
<accession>Q2J829</accession>
<evidence type="ECO:0000255" key="1">
    <source>
        <dbReference type="HAMAP-Rule" id="MF_00141"/>
    </source>
</evidence>
<comment type="function">
    <text evidence="1">Involved in peptide bond synthesis. Stimulates efficient translation and peptide-bond synthesis on native or reconstituted 70S ribosomes in vitro. Probably functions indirectly by altering the affinity of the ribosome for aminoacyl-tRNA, thus increasing their reactivity as acceptors for peptidyl transferase.</text>
</comment>
<comment type="pathway">
    <text evidence="1">Protein biosynthesis; polypeptide chain elongation.</text>
</comment>
<comment type="subcellular location">
    <subcellularLocation>
        <location evidence="1">Cytoplasm</location>
    </subcellularLocation>
</comment>
<comment type="similarity">
    <text evidence="1">Belongs to the elongation factor P family.</text>
</comment>
<feature type="chain" id="PRO_1000010744" description="Elongation factor P">
    <location>
        <begin position="1"/>
        <end position="187"/>
    </location>
</feature>
<keyword id="KW-0963">Cytoplasm</keyword>
<keyword id="KW-0251">Elongation factor</keyword>
<keyword id="KW-0648">Protein biosynthesis</keyword>
<keyword id="KW-1185">Reference proteome</keyword>
<dbReference type="EMBL" id="CP000249">
    <property type="protein sequence ID" value="ABD12563.1"/>
    <property type="molecule type" value="Genomic_DNA"/>
</dbReference>
<dbReference type="RefSeq" id="WP_011437591.1">
    <property type="nucleotide sequence ID" value="NZ_MSEA01000368.1"/>
</dbReference>
<dbReference type="SMR" id="Q2J829"/>
<dbReference type="STRING" id="106370.Francci3_3206"/>
<dbReference type="KEGG" id="fra:Francci3_3206"/>
<dbReference type="eggNOG" id="COG0231">
    <property type="taxonomic scope" value="Bacteria"/>
</dbReference>
<dbReference type="HOGENOM" id="CLU_074944_0_1_11"/>
<dbReference type="OrthoDB" id="9801844at2"/>
<dbReference type="PhylomeDB" id="Q2J829"/>
<dbReference type="UniPathway" id="UPA00345"/>
<dbReference type="Proteomes" id="UP000001937">
    <property type="component" value="Chromosome"/>
</dbReference>
<dbReference type="GO" id="GO:0005737">
    <property type="term" value="C:cytoplasm"/>
    <property type="evidence" value="ECO:0007669"/>
    <property type="project" value="UniProtKB-SubCell"/>
</dbReference>
<dbReference type="GO" id="GO:0003746">
    <property type="term" value="F:translation elongation factor activity"/>
    <property type="evidence" value="ECO:0007669"/>
    <property type="project" value="UniProtKB-UniRule"/>
</dbReference>
<dbReference type="GO" id="GO:0043043">
    <property type="term" value="P:peptide biosynthetic process"/>
    <property type="evidence" value="ECO:0007669"/>
    <property type="project" value="InterPro"/>
</dbReference>
<dbReference type="CDD" id="cd04470">
    <property type="entry name" value="S1_EF-P_repeat_1"/>
    <property type="match status" value="1"/>
</dbReference>
<dbReference type="CDD" id="cd05794">
    <property type="entry name" value="S1_EF-P_repeat_2"/>
    <property type="match status" value="1"/>
</dbReference>
<dbReference type="FunFam" id="2.30.30.30:FF:000003">
    <property type="entry name" value="Elongation factor P"/>
    <property type="match status" value="1"/>
</dbReference>
<dbReference type="FunFam" id="2.40.50.140:FF:000004">
    <property type="entry name" value="Elongation factor P"/>
    <property type="match status" value="1"/>
</dbReference>
<dbReference type="FunFam" id="2.40.50.140:FF:000009">
    <property type="entry name" value="Elongation factor P"/>
    <property type="match status" value="1"/>
</dbReference>
<dbReference type="Gene3D" id="2.30.30.30">
    <property type="match status" value="1"/>
</dbReference>
<dbReference type="Gene3D" id="2.40.50.140">
    <property type="entry name" value="Nucleic acid-binding proteins"/>
    <property type="match status" value="2"/>
</dbReference>
<dbReference type="HAMAP" id="MF_00141">
    <property type="entry name" value="EF_P"/>
    <property type="match status" value="1"/>
</dbReference>
<dbReference type="InterPro" id="IPR015365">
    <property type="entry name" value="Elong-fact-P_C"/>
</dbReference>
<dbReference type="InterPro" id="IPR012340">
    <property type="entry name" value="NA-bd_OB-fold"/>
</dbReference>
<dbReference type="InterPro" id="IPR014722">
    <property type="entry name" value="Rib_uL2_dom2"/>
</dbReference>
<dbReference type="InterPro" id="IPR020599">
    <property type="entry name" value="Transl_elong_fac_P/YeiP"/>
</dbReference>
<dbReference type="InterPro" id="IPR013185">
    <property type="entry name" value="Transl_elong_KOW-like"/>
</dbReference>
<dbReference type="InterPro" id="IPR001059">
    <property type="entry name" value="Transl_elong_P/YeiP_cen"/>
</dbReference>
<dbReference type="InterPro" id="IPR013852">
    <property type="entry name" value="Transl_elong_P/YeiP_CS"/>
</dbReference>
<dbReference type="InterPro" id="IPR011768">
    <property type="entry name" value="Transl_elongation_fac_P"/>
</dbReference>
<dbReference type="InterPro" id="IPR008991">
    <property type="entry name" value="Translation_prot_SH3-like_sf"/>
</dbReference>
<dbReference type="NCBIfam" id="TIGR00038">
    <property type="entry name" value="efp"/>
    <property type="match status" value="1"/>
</dbReference>
<dbReference type="NCBIfam" id="NF001810">
    <property type="entry name" value="PRK00529.1"/>
    <property type="match status" value="1"/>
</dbReference>
<dbReference type="PANTHER" id="PTHR30053">
    <property type="entry name" value="ELONGATION FACTOR P"/>
    <property type="match status" value="1"/>
</dbReference>
<dbReference type="PANTHER" id="PTHR30053:SF12">
    <property type="entry name" value="ELONGATION FACTOR P (EF-P) FAMILY PROTEIN"/>
    <property type="match status" value="1"/>
</dbReference>
<dbReference type="Pfam" id="PF01132">
    <property type="entry name" value="EFP"/>
    <property type="match status" value="1"/>
</dbReference>
<dbReference type="Pfam" id="PF08207">
    <property type="entry name" value="EFP_N"/>
    <property type="match status" value="1"/>
</dbReference>
<dbReference type="Pfam" id="PF09285">
    <property type="entry name" value="Elong-fact-P_C"/>
    <property type="match status" value="1"/>
</dbReference>
<dbReference type="PIRSF" id="PIRSF005901">
    <property type="entry name" value="EF-P"/>
    <property type="match status" value="1"/>
</dbReference>
<dbReference type="SMART" id="SM01185">
    <property type="entry name" value="EFP"/>
    <property type="match status" value="1"/>
</dbReference>
<dbReference type="SMART" id="SM00841">
    <property type="entry name" value="Elong-fact-P_C"/>
    <property type="match status" value="1"/>
</dbReference>
<dbReference type="SUPFAM" id="SSF50249">
    <property type="entry name" value="Nucleic acid-binding proteins"/>
    <property type="match status" value="2"/>
</dbReference>
<dbReference type="SUPFAM" id="SSF50104">
    <property type="entry name" value="Translation proteins SH3-like domain"/>
    <property type="match status" value="1"/>
</dbReference>
<dbReference type="PROSITE" id="PS01275">
    <property type="entry name" value="EFP"/>
    <property type="match status" value="1"/>
</dbReference>
<sequence length="187" mass="20072">MATTNDLKNGMTLDIDGVLWNVVGFQHVKPGKGGAFVRTTLKNVLTGKVVDRTFNAGVKVDVATVDRREMTYLYRDGADFVFMDSESYDQIPIPPDVVGGTADYMLENTVATVALHDGAPLYVELPASVELTISQTDPGVQGDRSTGGTKPATLETGATINVPLFITSGEKVKVDTRDGRYLGRVTS</sequence>
<reference key="1">
    <citation type="journal article" date="2007" name="Genome Res.">
        <title>Genome characteristics of facultatively symbiotic Frankia sp. strains reflect host range and host plant biogeography.</title>
        <authorList>
            <person name="Normand P."/>
            <person name="Lapierre P."/>
            <person name="Tisa L.S."/>
            <person name="Gogarten J.P."/>
            <person name="Alloisio N."/>
            <person name="Bagnarol E."/>
            <person name="Bassi C.A."/>
            <person name="Berry A.M."/>
            <person name="Bickhart D.M."/>
            <person name="Choisne N."/>
            <person name="Couloux A."/>
            <person name="Cournoyer B."/>
            <person name="Cruveiller S."/>
            <person name="Daubin V."/>
            <person name="Demange N."/>
            <person name="Francino M.P."/>
            <person name="Goltsman E."/>
            <person name="Huang Y."/>
            <person name="Kopp O.R."/>
            <person name="Labarre L."/>
            <person name="Lapidus A."/>
            <person name="Lavire C."/>
            <person name="Marechal J."/>
            <person name="Martinez M."/>
            <person name="Mastronunzio J.E."/>
            <person name="Mullin B.C."/>
            <person name="Niemann J."/>
            <person name="Pujic P."/>
            <person name="Rawnsley T."/>
            <person name="Rouy Z."/>
            <person name="Schenowitz C."/>
            <person name="Sellstedt A."/>
            <person name="Tavares F."/>
            <person name="Tomkins J.P."/>
            <person name="Vallenet D."/>
            <person name="Valverde C."/>
            <person name="Wall L.G."/>
            <person name="Wang Y."/>
            <person name="Medigue C."/>
            <person name="Benson D.R."/>
        </authorList>
    </citation>
    <scope>NUCLEOTIDE SEQUENCE [LARGE SCALE GENOMIC DNA]</scope>
    <source>
        <strain>DSM 45818 / CECT 9043 / HFP020203 / CcI3</strain>
    </source>
</reference>
<protein>
    <recommendedName>
        <fullName evidence="1">Elongation factor P</fullName>
        <shortName evidence="1">EF-P</shortName>
    </recommendedName>
</protein>
<name>EFP_FRACC</name>
<organism>
    <name type="scientific">Frankia casuarinae (strain DSM 45818 / CECT 9043 / HFP020203 / CcI3)</name>
    <dbReference type="NCBI Taxonomy" id="106370"/>
    <lineage>
        <taxon>Bacteria</taxon>
        <taxon>Bacillati</taxon>
        <taxon>Actinomycetota</taxon>
        <taxon>Actinomycetes</taxon>
        <taxon>Frankiales</taxon>
        <taxon>Frankiaceae</taxon>
        <taxon>Frankia</taxon>
    </lineage>
</organism>